<organism>
    <name type="scientific">Streptococcus pyogenes serotype M1</name>
    <dbReference type="NCBI Taxonomy" id="301447"/>
    <lineage>
        <taxon>Bacteria</taxon>
        <taxon>Bacillati</taxon>
        <taxon>Bacillota</taxon>
        <taxon>Bacilli</taxon>
        <taxon>Lactobacillales</taxon>
        <taxon>Streptococcaceae</taxon>
        <taxon>Streptococcus</taxon>
    </lineage>
</organism>
<comment type="function">
    <text evidence="1">Catalyzes the transfer of the diacylglyceryl group from phosphatidylglycerol to the sulfhydryl group of the N-terminal cysteine of a prolipoprotein, the first step in the formation of mature lipoproteins.</text>
</comment>
<comment type="catalytic activity">
    <reaction evidence="1">
        <text>L-cysteinyl-[prolipoprotein] + a 1,2-diacyl-sn-glycero-3-phospho-(1'-sn-glycerol) = an S-1,2-diacyl-sn-glyceryl-L-cysteinyl-[prolipoprotein] + sn-glycerol 1-phosphate + H(+)</text>
        <dbReference type="Rhea" id="RHEA:56712"/>
        <dbReference type="Rhea" id="RHEA-COMP:14679"/>
        <dbReference type="Rhea" id="RHEA-COMP:14680"/>
        <dbReference type="ChEBI" id="CHEBI:15378"/>
        <dbReference type="ChEBI" id="CHEBI:29950"/>
        <dbReference type="ChEBI" id="CHEBI:57685"/>
        <dbReference type="ChEBI" id="CHEBI:64716"/>
        <dbReference type="ChEBI" id="CHEBI:140658"/>
        <dbReference type="EC" id="2.5.1.145"/>
    </reaction>
</comment>
<comment type="pathway">
    <text evidence="1">Protein modification; lipoprotein biosynthesis (diacylglyceryl transfer).</text>
</comment>
<comment type="subcellular location">
    <subcellularLocation>
        <location evidence="1">Cell membrane</location>
        <topology evidence="1">Multi-pass membrane protein</topology>
    </subcellularLocation>
</comment>
<comment type="similarity">
    <text evidence="1">Belongs to the Lgt family.</text>
</comment>
<accession>P60965</accession>
<accession>Q48ZW5</accession>
<accession>Q9A0W4</accession>
<reference key="1">
    <citation type="journal article" date="2001" name="Proc. Natl. Acad. Sci. U.S.A.">
        <title>Complete genome sequence of an M1 strain of Streptococcus pyogenes.</title>
        <authorList>
            <person name="Ferretti J.J."/>
            <person name="McShan W.M."/>
            <person name="Ajdic D.J."/>
            <person name="Savic D.J."/>
            <person name="Savic G."/>
            <person name="Lyon K."/>
            <person name="Primeaux C."/>
            <person name="Sezate S."/>
            <person name="Suvorov A.N."/>
            <person name="Kenton S."/>
            <person name="Lai H.S."/>
            <person name="Lin S.P."/>
            <person name="Qian Y."/>
            <person name="Jia H.G."/>
            <person name="Najar F.Z."/>
            <person name="Ren Q."/>
            <person name="Zhu H."/>
            <person name="Song L."/>
            <person name="White J."/>
            <person name="Yuan X."/>
            <person name="Clifton S.W."/>
            <person name="Roe B.A."/>
            <person name="McLaughlin R.E."/>
        </authorList>
    </citation>
    <scope>NUCLEOTIDE SEQUENCE [LARGE SCALE GENOMIC DNA]</scope>
    <source>
        <strain>ATCC 700294 / SF370 / Serotype M1</strain>
    </source>
</reference>
<reference key="2">
    <citation type="journal article" date="2005" name="J. Infect. Dis.">
        <title>Evolutionary origin and emergence of a highly successful clone of serotype M1 group A Streptococcus involved multiple horizontal gene transfer events.</title>
        <authorList>
            <person name="Sumby P."/>
            <person name="Porcella S.F."/>
            <person name="Madrigal A.G."/>
            <person name="Barbian K.D."/>
            <person name="Virtaneva K."/>
            <person name="Ricklefs S.M."/>
            <person name="Sturdevant D.E."/>
            <person name="Graham M.R."/>
            <person name="Vuopio-Varkila J."/>
            <person name="Hoe N.P."/>
            <person name="Musser J.M."/>
        </authorList>
    </citation>
    <scope>NUCLEOTIDE SEQUENCE [LARGE SCALE GENOMIC DNA]</scope>
    <source>
        <strain>ATCC BAA-947 / MGAS5005 / Serotype M1</strain>
    </source>
</reference>
<evidence type="ECO:0000255" key="1">
    <source>
        <dbReference type="HAMAP-Rule" id="MF_01147"/>
    </source>
</evidence>
<protein>
    <recommendedName>
        <fullName evidence="1">Phosphatidylglycerol--prolipoprotein diacylglyceryl transferase</fullName>
        <ecNumber evidence="1">2.5.1.145</ecNumber>
    </recommendedName>
</protein>
<dbReference type="EC" id="2.5.1.145" evidence="1"/>
<dbReference type="EMBL" id="AE004092">
    <property type="protein sequence ID" value="AAK33567.1"/>
    <property type="molecule type" value="Genomic_DNA"/>
</dbReference>
<dbReference type="EMBL" id="CP000017">
    <property type="protein sequence ID" value="AAZ51103.1"/>
    <property type="molecule type" value="Genomic_DNA"/>
</dbReference>
<dbReference type="RefSeq" id="NP_268846.1">
    <property type="nucleotide sequence ID" value="NC_002737.2"/>
</dbReference>
<dbReference type="SMR" id="P60965"/>
<dbReference type="PaxDb" id="1314-HKU360_00499"/>
<dbReference type="KEGG" id="spy:SPy_0585"/>
<dbReference type="KEGG" id="spz:M5005_Spy0485"/>
<dbReference type="PATRIC" id="fig|160490.10.peg.501"/>
<dbReference type="HOGENOM" id="CLU_013386_0_1_9"/>
<dbReference type="OMA" id="WIELMRT"/>
<dbReference type="UniPathway" id="UPA00664"/>
<dbReference type="Proteomes" id="UP000000750">
    <property type="component" value="Chromosome"/>
</dbReference>
<dbReference type="GO" id="GO:0005886">
    <property type="term" value="C:plasma membrane"/>
    <property type="evidence" value="ECO:0007669"/>
    <property type="project" value="UniProtKB-SubCell"/>
</dbReference>
<dbReference type="GO" id="GO:0008961">
    <property type="term" value="F:phosphatidylglycerol-prolipoprotein diacylglyceryl transferase activity"/>
    <property type="evidence" value="ECO:0007669"/>
    <property type="project" value="UniProtKB-UniRule"/>
</dbReference>
<dbReference type="GO" id="GO:0042158">
    <property type="term" value="P:lipoprotein biosynthetic process"/>
    <property type="evidence" value="ECO:0007669"/>
    <property type="project" value="UniProtKB-UniRule"/>
</dbReference>
<dbReference type="HAMAP" id="MF_01147">
    <property type="entry name" value="Lgt"/>
    <property type="match status" value="1"/>
</dbReference>
<dbReference type="InterPro" id="IPR001640">
    <property type="entry name" value="Lgt"/>
</dbReference>
<dbReference type="NCBIfam" id="TIGR00544">
    <property type="entry name" value="lgt"/>
    <property type="match status" value="1"/>
</dbReference>
<dbReference type="PANTHER" id="PTHR30589:SF0">
    <property type="entry name" value="PHOSPHATIDYLGLYCEROL--PROLIPOPROTEIN DIACYLGLYCERYL TRANSFERASE"/>
    <property type="match status" value="1"/>
</dbReference>
<dbReference type="PANTHER" id="PTHR30589">
    <property type="entry name" value="PROLIPOPROTEIN DIACYLGLYCERYL TRANSFERASE"/>
    <property type="match status" value="1"/>
</dbReference>
<dbReference type="Pfam" id="PF01790">
    <property type="entry name" value="LGT"/>
    <property type="match status" value="1"/>
</dbReference>
<dbReference type="PROSITE" id="PS01311">
    <property type="entry name" value="LGT"/>
    <property type="match status" value="1"/>
</dbReference>
<gene>
    <name evidence="1" type="primary">lgt</name>
    <name type="ordered locus">SPy_0585</name>
    <name type="ordered locus">M5005_Spy0485</name>
</gene>
<keyword id="KW-1003">Cell membrane</keyword>
<keyword id="KW-0472">Membrane</keyword>
<keyword id="KW-1185">Reference proteome</keyword>
<keyword id="KW-0808">Transferase</keyword>
<keyword id="KW-0812">Transmembrane</keyword>
<keyword id="KW-1133">Transmembrane helix</keyword>
<name>LGT_STRP1</name>
<proteinExistence type="inferred from homology"/>
<feature type="chain" id="PRO_0000172690" description="Phosphatidylglycerol--prolipoprotein diacylglyceryl transferase">
    <location>
        <begin position="1"/>
        <end position="259"/>
    </location>
</feature>
<feature type="transmembrane region" description="Helical" evidence="1">
    <location>
        <begin position="12"/>
        <end position="32"/>
    </location>
</feature>
<feature type="transmembrane region" description="Helical" evidence="1">
    <location>
        <begin position="41"/>
        <end position="61"/>
    </location>
</feature>
<feature type="transmembrane region" description="Helical" evidence="1">
    <location>
        <begin position="80"/>
        <end position="100"/>
    </location>
</feature>
<feature type="transmembrane region" description="Helical" evidence="1">
    <location>
        <begin position="109"/>
        <end position="129"/>
    </location>
</feature>
<feature type="transmembrane region" description="Helical" evidence="1">
    <location>
        <begin position="167"/>
        <end position="187"/>
    </location>
</feature>
<feature type="transmembrane region" description="Helical" evidence="1">
    <location>
        <begin position="194"/>
        <end position="214"/>
    </location>
</feature>
<feature type="transmembrane region" description="Helical" evidence="1">
    <location>
        <begin position="226"/>
        <end position="246"/>
    </location>
</feature>
<feature type="binding site" evidence="1">
    <location>
        <position position="131"/>
    </location>
    <ligand>
        <name>a 1,2-diacyl-sn-glycero-3-phospho-(1'-sn-glycerol)</name>
        <dbReference type="ChEBI" id="CHEBI:64716"/>
    </ligand>
</feature>
<sequence length="259" mass="29420">MINPIALKCGPLAIHWYALCILSGLVLAVYLASKEAPKKGISSDAIFDFILIAFPLAIVGARIYYVIFEWSYYVKHLDEIIAIWNGGIAIYGGLITGALVLLAYCYNKVLNPIHFLDIAAPSVMVAQAIGRWGNFINQEAYGKAVSQLNYLPSFIQKQMFIEGSYRIPTFLYESLWNLLGFVIIMMWRRKPKSLLDGEIFAFYLIWYGSGRLVIEGMRTDSLMFLGIRISQYVSALLIIIGLIFVIKRRRQKGISYYQE</sequence>